<protein>
    <recommendedName>
        <fullName evidence="1">Undecaprenyl-diphosphatase</fullName>
        <ecNumber evidence="1">3.6.1.27</ecNumber>
    </recommendedName>
    <alternativeName>
        <fullName evidence="1">Bacitracin resistance protein</fullName>
    </alternativeName>
    <alternativeName>
        <fullName evidence="1">Undecaprenyl pyrophosphate phosphatase</fullName>
    </alternativeName>
</protein>
<feature type="chain" id="PRO_1000148804" description="Undecaprenyl-diphosphatase">
    <location>
        <begin position="1"/>
        <end position="265"/>
    </location>
</feature>
<feature type="transmembrane region" description="Helical" evidence="1">
    <location>
        <begin position="7"/>
        <end position="27"/>
    </location>
</feature>
<feature type="transmembrane region" description="Helical" evidence="1">
    <location>
        <begin position="45"/>
        <end position="65"/>
    </location>
</feature>
<feature type="transmembrane region" description="Helical" evidence="1">
    <location>
        <begin position="86"/>
        <end position="106"/>
    </location>
</feature>
<feature type="transmembrane region" description="Helical" evidence="1">
    <location>
        <begin position="108"/>
        <end position="128"/>
    </location>
</feature>
<feature type="transmembrane region" description="Helical" evidence="1">
    <location>
        <begin position="145"/>
        <end position="165"/>
    </location>
</feature>
<feature type="transmembrane region" description="Helical" evidence="1">
    <location>
        <begin position="186"/>
        <end position="206"/>
    </location>
</feature>
<feature type="transmembrane region" description="Helical" evidence="1">
    <location>
        <begin position="214"/>
        <end position="234"/>
    </location>
</feature>
<feature type="transmembrane region" description="Helical" evidence="1">
    <location>
        <begin position="245"/>
        <end position="265"/>
    </location>
</feature>
<gene>
    <name evidence="1" type="primary">uppP</name>
    <name type="ordered locus">BUAP5A_061</name>
</gene>
<keyword id="KW-0046">Antibiotic resistance</keyword>
<keyword id="KW-1003">Cell membrane</keyword>
<keyword id="KW-0133">Cell shape</keyword>
<keyword id="KW-0961">Cell wall biogenesis/degradation</keyword>
<keyword id="KW-0378">Hydrolase</keyword>
<keyword id="KW-0472">Membrane</keyword>
<keyword id="KW-0573">Peptidoglycan synthesis</keyword>
<keyword id="KW-0812">Transmembrane</keyword>
<keyword id="KW-1133">Transmembrane helix</keyword>
<accession>B8D8M0</accession>
<evidence type="ECO:0000255" key="1">
    <source>
        <dbReference type="HAMAP-Rule" id="MF_01006"/>
    </source>
</evidence>
<comment type="function">
    <text evidence="1">Catalyzes the dephosphorylation of undecaprenyl diphosphate (UPP). Confers resistance to bacitracin.</text>
</comment>
<comment type="catalytic activity">
    <reaction evidence="1">
        <text>di-trans,octa-cis-undecaprenyl diphosphate + H2O = di-trans,octa-cis-undecaprenyl phosphate + phosphate + H(+)</text>
        <dbReference type="Rhea" id="RHEA:28094"/>
        <dbReference type="ChEBI" id="CHEBI:15377"/>
        <dbReference type="ChEBI" id="CHEBI:15378"/>
        <dbReference type="ChEBI" id="CHEBI:43474"/>
        <dbReference type="ChEBI" id="CHEBI:58405"/>
        <dbReference type="ChEBI" id="CHEBI:60392"/>
        <dbReference type="EC" id="3.6.1.27"/>
    </reaction>
</comment>
<comment type="subcellular location">
    <subcellularLocation>
        <location evidence="1">Cell membrane</location>
        <topology evidence="1">Multi-pass membrane protein</topology>
    </subcellularLocation>
</comment>
<comment type="miscellaneous">
    <text>Bacitracin is thought to be involved in the inhibition of peptidoglycan synthesis by sequestering undecaprenyl diphosphate, thereby reducing the pool of lipid carrier available.</text>
</comment>
<comment type="similarity">
    <text evidence="1">Belongs to the UppP family.</text>
</comment>
<proteinExistence type="inferred from homology"/>
<reference key="1">
    <citation type="journal article" date="2009" name="Science">
        <title>The dynamics and time scale of ongoing genomic erosion in symbiotic bacteria.</title>
        <authorList>
            <person name="Moran N.A."/>
            <person name="McLaughlin H.J."/>
            <person name="Sorek R."/>
        </authorList>
    </citation>
    <scope>NUCLEOTIDE SEQUENCE [LARGE SCALE GENOMIC DNA]</scope>
    <source>
        <strain>5A</strain>
    </source>
</reference>
<sequence length="265" mass="30307">MLDLHQVIVSIIIGVIEGITEFLPISSTGHMIIASHWLKIDNENTKILEIFIEFGSALSILYFFHKKILRILKFNINVKKTNTKNLHILLAILPTIFFGLLFYKKIKLLFNTYNVMYALILGGIFLLISEIFKPKKYKTCSINDISLLQSAIIGFFQIFCLYPGFSRSGATIGTAILLGIKRSVAIEFSFIISIPLIMGASFYDFINNMHNFKILDLPIFFIGFMISFIVSILCIKKLLKIINRTSLIFFGIYRFIISGLIYFIN</sequence>
<dbReference type="EC" id="3.6.1.27" evidence="1"/>
<dbReference type="EMBL" id="CP001161">
    <property type="protein sequence ID" value="ACL30442.1"/>
    <property type="molecule type" value="Genomic_DNA"/>
</dbReference>
<dbReference type="RefSeq" id="WP_009874019.1">
    <property type="nucleotide sequence ID" value="NC_011833.1"/>
</dbReference>
<dbReference type="SMR" id="B8D8M0"/>
<dbReference type="KEGG" id="bap:BUAP5A_061"/>
<dbReference type="HOGENOM" id="CLU_060296_2_0_6"/>
<dbReference type="OrthoDB" id="9808289at2"/>
<dbReference type="Proteomes" id="UP000006904">
    <property type="component" value="Chromosome"/>
</dbReference>
<dbReference type="GO" id="GO:0005886">
    <property type="term" value="C:plasma membrane"/>
    <property type="evidence" value="ECO:0007669"/>
    <property type="project" value="UniProtKB-SubCell"/>
</dbReference>
<dbReference type="GO" id="GO:0050380">
    <property type="term" value="F:undecaprenyl-diphosphatase activity"/>
    <property type="evidence" value="ECO:0007669"/>
    <property type="project" value="UniProtKB-UniRule"/>
</dbReference>
<dbReference type="GO" id="GO:0071555">
    <property type="term" value="P:cell wall organization"/>
    <property type="evidence" value="ECO:0007669"/>
    <property type="project" value="UniProtKB-KW"/>
</dbReference>
<dbReference type="GO" id="GO:0009252">
    <property type="term" value="P:peptidoglycan biosynthetic process"/>
    <property type="evidence" value="ECO:0007669"/>
    <property type="project" value="UniProtKB-KW"/>
</dbReference>
<dbReference type="GO" id="GO:0008360">
    <property type="term" value="P:regulation of cell shape"/>
    <property type="evidence" value="ECO:0007669"/>
    <property type="project" value="UniProtKB-KW"/>
</dbReference>
<dbReference type="GO" id="GO:0046677">
    <property type="term" value="P:response to antibiotic"/>
    <property type="evidence" value="ECO:0007669"/>
    <property type="project" value="UniProtKB-UniRule"/>
</dbReference>
<dbReference type="HAMAP" id="MF_01006">
    <property type="entry name" value="Undec_diphosphatase"/>
    <property type="match status" value="1"/>
</dbReference>
<dbReference type="InterPro" id="IPR003824">
    <property type="entry name" value="UppP"/>
</dbReference>
<dbReference type="NCBIfam" id="NF001390">
    <property type="entry name" value="PRK00281.1-4"/>
    <property type="match status" value="1"/>
</dbReference>
<dbReference type="NCBIfam" id="TIGR00753">
    <property type="entry name" value="undec_PP_bacA"/>
    <property type="match status" value="1"/>
</dbReference>
<dbReference type="PANTHER" id="PTHR30622">
    <property type="entry name" value="UNDECAPRENYL-DIPHOSPHATASE"/>
    <property type="match status" value="1"/>
</dbReference>
<dbReference type="PANTHER" id="PTHR30622:SF3">
    <property type="entry name" value="UNDECAPRENYL-DIPHOSPHATASE"/>
    <property type="match status" value="1"/>
</dbReference>
<dbReference type="Pfam" id="PF02673">
    <property type="entry name" value="BacA"/>
    <property type="match status" value="1"/>
</dbReference>
<name>UPPP_BUCA5</name>
<organism>
    <name type="scientific">Buchnera aphidicola subsp. Acyrthosiphon pisum (strain 5A)</name>
    <dbReference type="NCBI Taxonomy" id="563178"/>
    <lineage>
        <taxon>Bacteria</taxon>
        <taxon>Pseudomonadati</taxon>
        <taxon>Pseudomonadota</taxon>
        <taxon>Gammaproteobacteria</taxon>
        <taxon>Enterobacterales</taxon>
        <taxon>Erwiniaceae</taxon>
        <taxon>Buchnera</taxon>
    </lineage>
</organism>